<dbReference type="EC" id="6.1.1.20" evidence="1"/>
<dbReference type="EMBL" id="CP000708">
    <property type="protein sequence ID" value="ABQ61956.1"/>
    <property type="molecule type" value="Genomic_DNA"/>
</dbReference>
<dbReference type="RefSeq" id="WP_006014532.1">
    <property type="nucleotide sequence ID" value="NC_009505.1"/>
</dbReference>
<dbReference type="SMR" id="A5VT73"/>
<dbReference type="GeneID" id="45125370"/>
<dbReference type="KEGG" id="bov:BOV_2037"/>
<dbReference type="HOGENOM" id="CLU_025086_0_1_5"/>
<dbReference type="PhylomeDB" id="A5VT73"/>
<dbReference type="Proteomes" id="UP000006383">
    <property type="component" value="Chromosome I"/>
</dbReference>
<dbReference type="GO" id="GO:0005737">
    <property type="term" value="C:cytoplasm"/>
    <property type="evidence" value="ECO:0007669"/>
    <property type="project" value="UniProtKB-SubCell"/>
</dbReference>
<dbReference type="GO" id="GO:0005524">
    <property type="term" value="F:ATP binding"/>
    <property type="evidence" value="ECO:0007669"/>
    <property type="project" value="UniProtKB-UniRule"/>
</dbReference>
<dbReference type="GO" id="GO:0000287">
    <property type="term" value="F:magnesium ion binding"/>
    <property type="evidence" value="ECO:0007669"/>
    <property type="project" value="UniProtKB-UniRule"/>
</dbReference>
<dbReference type="GO" id="GO:0004826">
    <property type="term" value="F:phenylalanine-tRNA ligase activity"/>
    <property type="evidence" value="ECO:0007669"/>
    <property type="project" value="UniProtKB-UniRule"/>
</dbReference>
<dbReference type="GO" id="GO:0000049">
    <property type="term" value="F:tRNA binding"/>
    <property type="evidence" value="ECO:0007669"/>
    <property type="project" value="InterPro"/>
</dbReference>
<dbReference type="GO" id="GO:0006432">
    <property type="term" value="P:phenylalanyl-tRNA aminoacylation"/>
    <property type="evidence" value="ECO:0007669"/>
    <property type="project" value="UniProtKB-UniRule"/>
</dbReference>
<dbReference type="CDD" id="cd00496">
    <property type="entry name" value="PheRS_alpha_core"/>
    <property type="match status" value="1"/>
</dbReference>
<dbReference type="FunFam" id="3.30.930.10:FF:000003">
    <property type="entry name" value="Phenylalanine--tRNA ligase alpha subunit"/>
    <property type="match status" value="1"/>
</dbReference>
<dbReference type="Gene3D" id="3.30.930.10">
    <property type="entry name" value="Bira Bifunctional Protein, Domain 2"/>
    <property type="match status" value="1"/>
</dbReference>
<dbReference type="HAMAP" id="MF_00281">
    <property type="entry name" value="Phe_tRNA_synth_alpha1"/>
    <property type="match status" value="1"/>
</dbReference>
<dbReference type="InterPro" id="IPR006195">
    <property type="entry name" value="aa-tRNA-synth_II"/>
</dbReference>
<dbReference type="InterPro" id="IPR045864">
    <property type="entry name" value="aa-tRNA-synth_II/BPL/LPL"/>
</dbReference>
<dbReference type="InterPro" id="IPR004529">
    <property type="entry name" value="Phe-tRNA-synth_IIc_asu"/>
</dbReference>
<dbReference type="InterPro" id="IPR004188">
    <property type="entry name" value="Phe-tRNA_ligase_II_N"/>
</dbReference>
<dbReference type="InterPro" id="IPR022911">
    <property type="entry name" value="Phe_tRNA_ligase_alpha1_bac"/>
</dbReference>
<dbReference type="InterPro" id="IPR002319">
    <property type="entry name" value="Phenylalanyl-tRNA_Synthase"/>
</dbReference>
<dbReference type="InterPro" id="IPR010978">
    <property type="entry name" value="tRNA-bd_arm"/>
</dbReference>
<dbReference type="NCBIfam" id="TIGR00468">
    <property type="entry name" value="pheS"/>
    <property type="match status" value="1"/>
</dbReference>
<dbReference type="PANTHER" id="PTHR11538:SF41">
    <property type="entry name" value="PHENYLALANINE--TRNA LIGASE, MITOCHONDRIAL"/>
    <property type="match status" value="1"/>
</dbReference>
<dbReference type="PANTHER" id="PTHR11538">
    <property type="entry name" value="PHENYLALANYL-TRNA SYNTHETASE"/>
    <property type="match status" value="1"/>
</dbReference>
<dbReference type="Pfam" id="PF02912">
    <property type="entry name" value="Phe_tRNA-synt_N"/>
    <property type="match status" value="1"/>
</dbReference>
<dbReference type="Pfam" id="PF01409">
    <property type="entry name" value="tRNA-synt_2d"/>
    <property type="match status" value="1"/>
</dbReference>
<dbReference type="SUPFAM" id="SSF55681">
    <property type="entry name" value="Class II aaRS and biotin synthetases"/>
    <property type="match status" value="1"/>
</dbReference>
<dbReference type="SUPFAM" id="SSF46589">
    <property type="entry name" value="tRNA-binding arm"/>
    <property type="match status" value="1"/>
</dbReference>
<dbReference type="PROSITE" id="PS50862">
    <property type="entry name" value="AA_TRNA_LIGASE_II"/>
    <property type="match status" value="1"/>
</dbReference>
<accession>A5VT73</accession>
<protein>
    <recommendedName>
        <fullName evidence="1">Phenylalanine--tRNA ligase alpha subunit</fullName>
        <ecNumber evidence="1">6.1.1.20</ecNumber>
    </recommendedName>
    <alternativeName>
        <fullName evidence="1">Phenylalanyl-tRNA synthetase alpha subunit</fullName>
        <shortName evidence="1">PheRS</shortName>
    </alternativeName>
</protein>
<gene>
    <name evidence="1" type="primary">pheS</name>
    <name type="ordered locus">BOV_2037</name>
</gene>
<feature type="chain" id="PRO_1000006804" description="Phenylalanine--tRNA ligase alpha subunit">
    <location>
        <begin position="1"/>
        <end position="369"/>
    </location>
</feature>
<feature type="binding site" evidence="1">
    <location>
        <position position="269"/>
    </location>
    <ligand>
        <name>Mg(2+)</name>
        <dbReference type="ChEBI" id="CHEBI:18420"/>
        <note>shared with beta subunit</note>
    </ligand>
</feature>
<evidence type="ECO:0000255" key="1">
    <source>
        <dbReference type="HAMAP-Rule" id="MF_00281"/>
    </source>
</evidence>
<proteinExistence type="inferred from homology"/>
<organism>
    <name type="scientific">Brucella ovis (strain ATCC 25840 / 63/290 / NCTC 10512)</name>
    <dbReference type="NCBI Taxonomy" id="444178"/>
    <lineage>
        <taxon>Bacteria</taxon>
        <taxon>Pseudomonadati</taxon>
        <taxon>Pseudomonadota</taxon>
        <taxon>Alphaproteobacteria</taxon>
        <taxon>Hyphomicrobiales</taxon>
        <taxon>Brucellaceae</taxon>
        <taxon>Brucella/Ochrobactrum group</taxon>
        <taxon>Brucella</taxon>
    </lineage>
</organism>
<reference key="1">
    <citation type="journal article" date="2009" name="PLoS ONE">
        <title>Genome degradation in Brucella ovis corresponds with narrowing of its host range and tissue tropism.</title>
        <authorList>
            <person name="Tsolis R.M."/>
            <person name="Seshadri R."/>
            <person name="Santos R.L."/>
            <person name="Sangari F.J."/>
            <person name="Lobo J.M."/>
            <person name="de Jong M.F."/>
            <person name="Ren Q."/>
            <person name="Myers G."/>
            <person name="Brinkac L.M."/>
            <person name="Nelson W.C."/>
            <person name="Deboy R.T."/>
            <person name="Angiuoli S."/>
            <person name="Khouri H."/>
            <person name="Dimitrov G."/>
            <person name="Robinson J.R."/>
            <person name="Mulligan S."/>
            <person name="Walker R.L."/>
            <person name="Elzer P.E."/>
            <person name="Hassan K.A."/>
            <person name="Paulsen I.T."/>
        </authorList>
    </citation>
    <scope>NUCLEOTIDE SEQUENCE [LARGE SCALE GENOMIC DNA]</scope>
    <source>
        <strain>ATCC 25840 / 63/290 / NCTC 10512</strain>
    </source>
</reference>
<keyword id="KW-0030">Aminoacyl-tRNA synthetase</keyword>
<keyword id="KW-0067">ATP-binding</keyword>
<keyword id="KW-0963">Cytoplasm</keyword>
<keyword id="KW-0436">Ligase</keyword>
<keyword id="KW-0460">Magnesium</keyword>
<keyword id="KW-0479">Metal-binding</keyword>
<keyword id="KW-0547">Nucleotide-binding</keyword>
<keyword id="KW-0648">Protein biosynthesis</keyword>
<sequence>MSDLEQLERQILEDIAAAVDEQGIEAVRVAALGKKGTVSEKLKTLGGMSPEERQMQGPAINGLKNRVTEALSERRTELRKAAVAARLEREKVDVTLPVRESAASRGRIHPISQVIDEITAIFADMGFSIAEGPDIETDYYNFTALNFPEGHPAREMHDTFFFNPDEKGERKLLRTHTSPVQVHTMEKFAAMRDKEGRDEPIRIVIPGKTYRMDSDATHSPMFHQVEGLVVDKSANVVNMKWVLEEFCKAFFEVPSVKMRMRPSFFPFTEPSVEVDIQCDRSGPHVKFGEGNDWLEILGCGMVHPNVLRMSGYDPEVYQGFAWGMGIDRIAMLKYGMPDLRAFFDADVRWIEHYGFRPLDIPTLFGGLSA</sequence>
<comment type="catalytic activity">
    <reaction evidence="1">
        <text>tRNA(Phe) + L-phenylalanine + ATP = L-phenylalanyl-tRNA(Phe) + AMP + diphosphate + H(+)</text>
        <dbReference type="Rhea" id="RHEA:19413"/>
        <dbReference type="Rhea" id="RHEA-COMP:9668"/>
        <dbReference type="Rhea" id="RHEA-COMP:9699"/>
        <dbReference type="ChEBI" id="CHEBI:15378"/>
        <dbReference type="ChEBI" id="CHEBI:30616"/>
        <dbReference type="ChEBI" id="CHEBI:33019"/>
        <dbReference type="ChEBI" id="CHEBI:58095"/>
        <dbReference type="ChEBI" id="CHEBI:78442"/>
        <dbReference type="ChEBI" id="CHEBI:78531"/>
        <dbReference type="ChEBI" id="CHEBI:456215"/>
        <dbReference type="EC" id="6.1.1.20"/>
    </reaction>
</comment>
<comment type="cofactor">
    <cofactor evidence="1">
        <name>Mg(2+)</name>
        <dbReference type="ChEBI" id="CHEBI:18420"/>
    </cofactor>
    <text evidence="1">Binds 2 magnesium ions per tetramer.</text>
</comment>
<comment type="subunit">
    <text evidence="1">Tetramer of two alpha and two beta subunits.</text>
</comment>
<comment type="subcellular location">
    <subcellularLocation>
        <location evidence="1">Cytoplasm</location>
    </subcellularLocation>
</comment>
<comment type="similarity">
    <text evidence="1">Belongs to the class-II aminoacyl-tRNA synthetase family. Phe-tRNA synthetase alpha subunit type 1 subfamily.</text>
</comment>
<name>SYFA_BRUO2</name>